<dbReference type="EMBL" id="CP000361">
    <property type="protein sequence ID" value="ABV67075.1"/>
    <property type="molecule type" value="Genomic_DNA"/>
</dbReference>
<dbReference type="RefSeq" id="WP_012012552.1">
    <property type="nucleotide sequence ID" value="NC_009850.1"/>
</dbReference>
<dbReference type="SMR" id="A8ET01"/>
<dbReference type="STRING" id="367737.Abu_0810"/>
<dbReference type="GeneID" id="24305193"/>
<dbReference type="KEGG" id="abu:Abu_0810"/>
<dbReference type="eggNOG" id="COG0378">
    <property type="taxonomic scope" value="Bacteria"/>
</dbReference>
<dbReference type="HOGENOM" id="CLU_072144_1_0_7"/>
<dbReference type="Proteomes" id="UP000001136">
    <property type="component" value="Chromosome"/>
</dbReference>
<dbReference type="GO" id="GO:0005737">
    <property type="term" value="C:cytoplasm"/>
    <property type="evidence" value="ECO:0007669"/>
    <property type="project" value="UniProtKB-SubCell"/>
</dbReference>
<dbReference type="GO" id="GO:0005525">
    <property type="term" value="F:GTP binding"/>
    <property type="evidence" value="ECO:0007669"/>
    <property type="project" value="UniProtKB-KW"/>
</dbReference>
<dbReference type="GO" id="GO:0003924">
    <property type="term" value="F:GTPase activity"/>
    <property type="evidence" value="ECO:0007669"/>
    <property type="project" value="InterPro"/>
</dbReference>
<dbReference type="GO" id="GO:0016151">
    <property type="term" value="F:nickel cation binding"/>
    <property type="evidence" value="ECO:0007669"/>
    <property type="project" value="InterPro"/>
</dbReference>
<dbReference type="GO" id="GO:0043419">
    <property type="term" value="P:urea catabolic process"/>
    <property type="evidence" value="ECO:0007669"/>
    <property type="project" value="InterPro"/>
</dbReference>
<dbReference type="Gene3D" id="3.40.50.300">
    <property type="entry name" value="P-loop containing nucleotide triphosphate hydrolases"/>
    <property type="match status" value="1"/>
</dbReference>
<dbReference type="HAMAP" id="MF_01389">
    <property type="entry name" value="UreG"/>
    <property type="match status" value="1"/>
</dbReference>
<dbReference type="InterPro" id="IPR003495">
    <property type="entry name" value="CobW/HypB/UreG_nucleotide-bd"/>
</dbReference>
<dbReference type="InterPro" id="IPR027417">
    <property type="entry name" value="P-loop_NTPase"/>
</dbReference>
<dbReference type="InterPro" id="IPR004400">
    <property type="entry name" value="UreG"/>
</dbReference>
<dbReference type="NCBIfam" id="TIGR00101">
    <property type="entry name" value="ureG"/>
    <property type="match status" value="1"/>
</dbReference>
<dbReference type="PANTHER" id="PTHR31715">
    <property type="entry name" value="UREASE ACCESSORY PROTEIN G"/>
    <property type="match status" value="1"/>
</dbReference>
<dbReference type="PANTHER" id="PTHR31715:SF0">
    <property type="entry name" value="UREASE ACCESSORY PROTEIN G"/>
    <property type="match status" value="1"/>
</dbReference>
<dbReference type="Pfam" id="PF02492">
    <property type="entry name" value="cobW"/>
    <property type="match status" value="1"/>
</dbReference>
<dbReference type="PIRSF" id="PIRSF005624">
    <property type="entry name" value="Ni-bind_GTPase"/>
    <property type="match status" value="1"/>
</dbReference>
<dbReference type="SUPFAM" id="SSF52540">
    <property type="entry name" value="P-loop containing nucleoside triphosphate hydrolases"/>
    <property type="match status" value="1"/>
</dbReference>
<comment type="function">
    <text evidence="1">Facilitates the functional incorporation of the urease nickel metallocenter. This process requires GTP hydrolysis, probably effectuated by UreG.</text>
</comment>
<comment type="subunit">
    <text evidence="1">Homodimer. UreD, UreF and UreG form a complex that acts as a GTP-hydrolysis-dependent molecular chaperone, activating the urease apoprotein by helping to assemble the nickel containing metallocenter of UreC. The UreE protein probably delivers the nickel.</text>
</comment>
<comment type="subcellular location">
    <subcellularLocation>
        <location evidence="1">Cytoplasm</location>
    </subcellularLocation>
</comment>
<comment type="similarity">
    <text evidence="1">Belongs to the SIMIBI class G3E GTPase family. UreG subfamily.</text>
</comment>
<protein>
    <recommendedName>
        <fullName evidence="1">Urease accessory protein UreG</fullName>
    </recommendedName>
</protein>
<reference key="1">
    <citation type="journal article" date="2007" name="PLoS ONE">
        <title>The complete genome sequence and analysis of the Epsilonproteobacterium Arcobacter butzleri.</title>
        <authorList>
            <person name="Miller W.G."/>
            <person name="Parker C.T."/>
            <person name="Rubenfield M."/>
            <person name="Mendz G.L."/>
            <person name="Woesten M.M.S.M."/>
            <person name="Ussery D.W."/>
            <person name="Stolz J.F."/>
            <person name="Binnewies T.T."/>
            <person name="Hallin P.F."/>
            <person name="Wang G."/>
            <person name="Malek J.A."/>
            <person name="Rogosin A."/>
            <person name="Stanker L.H."/>
            <person name="Mandrell R.E."/>
        </authorList>
    </citation>
    <scope>NUCLEOTIDE SEQUENCE [LARGE SCALE GENOMIC DNA]</scope>
    <source>
        <strain>RM4018</strain>
    </source>
</reference>
<feature type="chain" id="PRO_0000347346" description="Urease accessory protein UreG">
    <location>
        <begin position="1"/>
        <end position="195"/>
    </location>
</feature>
<feature type="binding site" evidence="1">
    <location>
        <begin position="9"/>
        <end position="16"/>
    </location>
    <ligand>
        <name>GTP</name>
        <dbReference type="ChEBI" id="CHEBI:37565"/>
    </ligand>
</feature>
<accession>A8ET01</accession>
<evidence type="ECO:0000255" key="1">
    <source>
        <dbReference type="HAMAP-Rule" id="MF_01389"/>
    </source>
</evidence>
<keyword id="KW-0143">Chaperone</keyword>
<keyword id="KW-0963">Cytoplasm</keyword>
<keyword id="KW-0342">GTP-binding</keyword>
<keyword id="KW-0996">Nickel insertion</keyword>
<keyword id="KW-0547">Nucleotide-binding</keyword>
<keyword id="KW-1185">Reference proteome</keyword>
<organism>
    <name type="scientific">Aliarcobacter butzleri (strain RM4018)</name>
    <name type="common">Arcobacter butzleri</name>
    <dbReference type="NCBI Taxonomy" id="367737"/>
    <lineage>
        <taxon>Bacteria</taxon>
        <taxon>Pseudomonadati</taxon>
        <taxon>Campylobacterota</taxon>
        <taxon>Epsilonproteobacteria</taxon>
        <taxon>Campylobacterales</taxon>
        <taxon>Arcobacteraceae</taxon>
        <taxon>Aliarcobacter</taxon>
    </lineage>
</organism>
<name>UREG_ALIB4</name>
<gene>
    <name evidence="1" type="primary">ureG</name>
    <name type="ordered locus">Abu_0810</name>
</gene>
<sequence>MSLKIGIAGPVGSGKTSLIESLTNLLKDKYSLGIVTNDIYTTEDANYLKKTLDLDNERIIGVETGGCPHTAIRDDISMNQKAVVELEEKFNPDIVFVESGGDNLSATFSYELIDYYIYVIDVAQGADIPRKKGAGLLFSDLLIVNKTDLAPYVEIDLVDMQIDVKENRKNKPYVFISKKEPQTLNQVVSWIEALI</sequence>
<proteinExistence type="inferred from homology"/>